<feature type="chain" id="PRO_0000297586" description="Ciliary microtubule-associated protein 2">
    <location>
        <begin position="1"/>
        <end position="414"/>
    </location>
</feature>
<feature type="sequence conflict" description="In Ref. 2; AAH55111." evidence="3" ref="2">
    <original>N</original>
    <variation>D</variation>
    <location>
        <position position="165"/>
    </location>
</feature>
<accession>A2AVQ5</accession>
<accession>A2AVQ4</accession>
<accession>Q7TPM4</accession>
<proteinExistence type="evidence at transcript level"/>
<sequence length="414" mass="47584">MRPRTHGAPPRNIMSTIPKWFKGAPFGVQSHRFDVSAVYPNQKKFSTFTEAPYSRHHSVELSHIGPGTYNSKDTCFSKKFLEQKLGSGWSQAHEATRLTQLPHFHYQAIKKEKEQQVHKRGPGSYNIKDFITELQKKPQSKRGLLSSGETRFRGFIGNYYPGPGNYGEKGNPYTQLEEKAWNRSHSDGLMCRVSNKPPLFHQGSGLGPGTYTIKSDLETFVKKSTGNRGPYDIFSGERSSPLPYGHYSVQKMKPKELTDYKSFLDEMNSQHKKKQGVFSKYPRDPKHPTERIFWTTLSQCPKNMDIAGPGSWLPHETEQKHVNRPPFLLASKRCGLKAYQMILGTWNPVGVGRYLNTTLMESIDRRQRYRSLYMSEPKRYLQDLTRDRLMQKRITPITKGKCRPTVDYNSDPTP</sequence>
<name>CMAP2_MOUSE</name>
<keyword id="KW-1185">Reference proteome</keyword>
<reference key="1">
    <citation type="journal article" date="2009" name="PLoS Biol.">
        <title>Lineage-specific biology revealed by a finished genome assembly of the mouse.</title>
        <authorList>
            <person name="Church D.M."/>
            <person name="Goodstadt L."/>
            <person name="Hillier L.W."/>
            <person name="Zody M.C."/>
            <person name="Goldstein S."/>
            <person name="She X."/>
            <person name="Bult C.J."/>
            <person name="Agarwala R."/>
            <person name="Cherry J.L."/>
            <person name="DiCuccio M."/>
            <person name="Hlavina W."/>
            <person name="Kapustin Y."/>
            <person name="Meric P."/>
            <person name="Maglott D."/>
            <person name="Birtle Z."/>
            <person name="Marques A.C."/>
            <person name="Graves T."/>
            <person name="Zhou S."/>
            <person name="Teague B."/>
            <person name="Potamousis K."/>
            <person name="Churas C."/>
            <person name="Place M."/>
            <person name="Herschleb J."/>
            <person name="Runnheim R."/>
            <person name="Forrest D."/>
            <person name="Amos-Landgraf J."/>
            <person name="Schwartz D.C."/>
            <person name="Cheng Z."/>
            <person name="Lindblad-Toh K."/>
            <person name="Eichler E.E."/>
            <person name="Ponting C.P."/>
        </authorList>
    </citation>
    <scope>NUCLEOTIDE SEQUENCE [LARGE SCALE GENOMIC DNA]</scope>
    <source>
        <strain>C57BL/6J</strain>
    </source>
</reference>
<reference key="2">
    <citation type="journal article" date="2004" name="Genome Res.">
        <title>The status, quality, and expansion of the NIH full-length cDNA project: the Mammalian Gene Collection (MGC).</title>
        <authorList>
            <consortium name="The MGC Project Team"/>
        </authorList>
    </citation>
    <scope>NUCLEOTIDE SEQUENCE [LARGE SCALE MRNA]</scope>
    <source>
        <tissue>Testis</tissue>
    </source>
</reference>
<reference key="3">
    <citation type="journal article" date="2015" name="Science">
        <title>T cell metabolism. The protein LEM promotes CD8+ T cell immunity through effects on mitochondrial respiration.</title>
        <authorList>
            <person name="Okoye I."/>
            <person name="Wang L."/>
            <person name="Pallmer K."/>
            <person name="Richter K."/>
            <person name="Ichimura T."/>
            <person name="Haas R."/>
            <person name="Crouse J."/>
            <person name="Choi O."/>
            <person name="Heathcote D."/>
            <person name="Lovo E."/>
            <person name="Mauro C."/>
            <person name="Abdi R."/>
            <person name="Oxenius A."/>
            <person name="Rutschmann S."/>
            <person name="Ashton-Rickardt P.G."/>
        </authorList>
    </citation>
    <scope>RETRACTED PAPER</scope>
</reference>
<reference key="4">
    <citation type="journal article" date="2016" name="Science">
        <authorList>
            <person name="Sills J."/>
            <person name="Berg J."/>
        </authorList>
    </citation>
    <scope>RETRACTION NOTICE OF PUBMED:25883318</scope>
</reference>
<protein>
    <recommendedName>
        <fullName evidence="1">Ciliary microtubule-associated protein 2</fullName>
    </recommendedName>
    <alternativeName>
        <fullName evidence="2">Lymphocyte expansion molecule</fullName>
    </alternativeName>
</protein>
<organism>
    <name type="scientific">Mus musculus</name>
    <name type="common">Mouse</name>
    <dbReference type="NCBI Taxonomy" id="10090"/>
    <lineage>
        <taxon>Eukaryota</taxon>
        <taxon>Metazoa</taxon>
        <taxon>Chordata</taxon>
        <taxon>Craniata</taxon>
        <taxon>Vertebrata</taxon>
        <taxon>Euteleostomi</taxon>
        <taxon>Mammalia</taxon>
        <taxon>Eutheria</taxon>
        <taxon>Euarchontoglires</taxon>
        <taxon>Glires</taxon>
        <taxon>Rodentia</taxon>
        <taxon>Myomorpha</taxon>
        <taxon>Muroidea</taxon>
        <taxon>Muridae</taxon>
        <taxon>Murinae</taxon>
        <taxon>Mus</taxon>
        <taxon>Mus</taxon>
    </lineage>
</organism>
<evidence type="ECO:0000250" key="1">
    <source>
        <dbReference type="UniProtKB" id="Q3ZCV2"/>
    </source>
</evidence>
<evidence type="ECO:0000303" key="2">
    <source>
    </source>
</evidence>
<evidence type="ECO:0000305" key="3"/>
<evidence type="ECO:0000312" key="4">
    <source>
        <dbReference type="MGI" id="MGI:2681853"/>
    </source>
</evidence>
<gene>
    <name type="primary">Cimap2</name>
    <name evidence="2" type="synonym">Lem</name>
    <name evidence="4" type="synonym">Lexm</name>
</gene>
<comment type="caution">
    <text>Was reported to promote CD8+ T cell immunity through effects on mitochondrial respiration (PubMed:25883318). However, the corresponding article has been retracted (PubMed:27980177).</text>
</comment>
<comment type="sequence caution" evidence="3">
    <conflict type="erroneous initiation">
        <sequence resource="EMBL-CDS" id="AAH55111"/>
    </conflict>
</comment>
<dbReference type="EMBL" id="AL929585">
    <property type="status" value="NOT_ANNOTATED_CDS"/>
    <property type="molecule type" value="Genomic_DNA"/>
</dbReference>
<dbReference type="EMBL" id="BC055111">
    <property type="protein sequence ID" value="AAH55111.1"/>
    <property type="status" value="ALT_INIT"/>
    <property type="molecule type" value="mRNA"/>
</dbReference>
<dbReference type="CCDS" id="CCDS51252.1"/>
<dbReference type="RefSeq" id="NP_899005.2">
    <property type="nucleotide sequence ID" value="NM_183182.4"/>
</dbReference>
<dbReference type="BioGRID" id="232429">
    <property type="interactions" value="1"/>
</dbReference>
<dbReference type="DIP" id="DIP-61652N"/>
<dbReference type="FunCoup" id="A2AVQ5">
    <property type="interactions" value="242"/>
</dbReference>
<dbReference type="STRING" id="10090.ENSMUSP00000102400"/>
<dbReference type="PhosphoSitePlus" id="A2AVQ5"/>
<dbReference type="PaxDb" id="10090-ENSMUSP00000102400"/>
<dbReference type="ProteomicsDB" id="291939"/>
<dbReference type="Antibodypedia" id="49963">
    <property type="antibodies" value="128 antibodies from 20 providers"/>
</dbReference>
<dbReference type="DNASU" id="242602"/>
<dbReference type="Ensembl" id="ENSMUST00000067387.9">
    <property type="protein sequence ID" value="ENSMUSP00000066732.3"/>
    <property type="gene ID" value="ENSMUSG00000054362.10"/>
</dbReference>
<dbReference type="Ensembl" id="ENSMUST00000106788.2">
    <property type="protein sequence ID" value="ENSMUSP00000102400.2"/>
    <property type="gene ID" value="ENSMUSG00000054362.10"/>
</dbReference>
<dbReference type="Ensembl" id="ENSMUST00000189032.7">
    <property type="protein sequence ID" value="ENSMUSP00000139868.2"/>
    <property type="gene ID" value="ENSMUSG00000054362.10"/>
</dbReference>
<dbReference type="GeneID" id="242602"/>
<dbReference type="KEGG" id="mmu:242602"/>
<dbReference type="UCSC" id="uc012dhz.1">
    <property type="organism name" value="mouse"/>
</dbReference>
<dbReference type="AGR" id="MGI:2681853"/>
<dbReference type="CTD" id="163747"/>
<dbReference type="MGI" id="MGI:2681853">
    <property type="gene designation" value="Cimap2"/>
</dbReference>
<dbReference type="VEuPathDB" id="HostDB:ENSMUSG00000054362"/>
<dbReference type="eggNOG" id="KOG4087">
    <property type="taxonomic scope" value="Eukaryota"/>
</dbReference>
<dbReference type="GeneTree" id="ENSGT00390000015471"/>
<dbReference type="HOGENOM" id="CLU_053450_0_0_1"/>
<dbReference type="InParanoid" id="A2AVQ5"/>
<dbReference type="OMA" id="SSQMIMG"/>
<dbReference type="OrthoDB" id="6275292at2759"/>
<dbReference type="PhylomeDB" id="A2AVQ5"/>
<dbReference type="TreeFam" id="TF329164"/>
<dbReference type="BioGRID-ORCS" id="242602">
    <property type="hits" value="2 hits in 44 CRISPR screens"/>
</dbReference>
<dbReference type="ChiTaRS" id="Lexm">
    <property type="organism name" value="mouse"/>
</dbReference>
<dbReference type="PRO" id="PR:A2AVQ5"/>
<dbReference type="Proteomes" id="UP000000589">
    <property type="component" value="Chromosome 4"/>
</dbReference>
<dbReference type="RNAct" id="A2AVQ5">
    <property type="molecule type" value="protein"/>
</dbReference>
<dbReference type="Bgee" id="ENSMUSG00000054362">
    <property type="expression patterns" value="Expressed in testis and 34 other cell types or tissues"/>
</dbReference>
<dbReference type="ExpressionAtlas" id="A2AVQ5">
    <property type="expression patterns" value="baseline and differential"/>
</dbReference>
<dbReference type="InterPro" id="IPR033557">
    <property type="entry name" value="CIMAP2"/>
</dbReference>
<dbReference type="InterPro" id="IPR010736">
    <property type="entry name" value="SHIPPO-rpt"/>
</dbReference>
<dbReference type="PANTHER" id="PTHR34914">
    <property type="entry name" value="LYMPHOCYTE EXPANSION MOLECULE"/>
    <property type="match status" value="1"/>
</dbReference>
<dbReference type="PANTHER" id="PTHR34914:SF1">
    <property type="entry name" value="LYMPHOCYTE EXPANSION MOLECULE"/>
    <property type="match status" value="1"/>
</dbReference>
<dbReference type="Pfam" id="PF07004">
    <property type="entry name" value="SHIPPO-rpt"/>
    <property type="match status" value="1"/>
</dbReference>